<protein>
    <recommendedName>
        <fullName>D-inositol 3-phosphate glycosyltransferase</fullName>
        <ecNumber evidence="1">2.4.1.250</ecNumber>
    </recommendedName>
    <alternativeName>
        <fullName evidence="1">N-acetylglucosamine-inositol-phosphate N-acetylglucosaminyltransferase</fullName>
        <shortName evidence="1">GlcNAc-Ins-P N-acetylglucosaminyltransferase</shortName>
    </alternativeName>
</protein>
<keyword id="KW-0328">Glycosyltransferase</keyword>
<keyword id="KW-0460">Magnesium</keyword>
<keyword id="KW-0479">Metal-binding</keyword>
<keyword id="KW-0808">Transferase</keyword>
<organism>
    <name type="scientific">Pseudarthrobacter chlorophenolicus (strain ATCC 700700 / DSM 12829 / CIP 107037 / JCM 12360 / KCTC 9906 / NCIMB 13794 / A6)</name>
    <name type="common">Arthrobacter chlorophenolicus</name>
    <dbReference type="NCBI Taxonomy" id="452863"/>
    <lineage>
        <taxon>Bacteria</taxon>
        <taxon>Bacillati</taxon>
        <taxon>Actinomycetota</taxon>
        <taxon>Actinomycetes</taxon>
        <taxon>Micrococcales</taxon>
        <taxon>Micrococcaceae</taxon>
        <taxon>Pseudarthrobacter</taxon>
    </lineage>
</organism>
<sequence length="420" mass="45550">MALIRRVALLSLHTSPMEQPGSGDAGGMNVYIRELASALAEAGVEVEIFTRATSASQPAVEHPDPGVCVHNVLAGPTKKIPKEELPGLLHSMVEEIEQIRRRQPHGRYDVIHSHYWVSGIAGLELSELWGVPLVHTMHTMAKVKNLLLESGEQPEPRRREVGEHRIVDGAARLIANTSSEAAELVSHYGADYDRIDIAPPGVDLATFTPAFRTKARRDHGVDPGTFHLLFAGRIQRLKGPQVLVKAAALLRQRRPDIDLRLTILGELSGNKEFNLRKLVADAEMDDVVTQLPPVTAPELAAWFRAADVVVMPSFSESFGLVALEAQACGTPVVATRVGGLSRAIFHGRTGLLVDGHHAADWADAFEALYDDPATRVDMGRAAAIRAQNSGWSRTAAITLESYHAAVDRHVGHLVPAVPVT</sequence>
<name>MSHA_PSECP</name>
<feature type="chain" id="PRO_0000400110" description="D-inositol 3-phosphate glycosyltransferase">
    <location>
        <begin position="1"/>
        <end position="420"/>
    </location>
</feature>
<feature type="binding site" evidence="1">
    <location>
        <position position="13"/>
    </location>
    <ligand>
        <name>1D-myo-inositol 3-phosphate</name>
        <dbReference type="ChEBI" id="CHEBI:58401"/>
    </ligand>
</feature>
<feature type="binding site" evidence="1">
    <location>
        <begin position="19"/>
        <end position="20"/>
    </location>
    <ligand>
        <name>UDP-N-acetyl-alpha-D-glucosamine</name>
        <dbReference type="ChEBI" id="CHEBI:57705"/>
    </ligand>
</feature>
<feature type="binding site" evidence="1">
    <location>
        <begin position="24"/>
        <end position="29"/>
    </location>
    <ligand>
        <name>1D-myo-inositol 3-phosphate</name>
        <dbReference type="ChEBI" id="CHEBI:58401"/>
    </ligand>
</feature>
<feature type="binding site" evidence="1">
    <location>
        <position position="27"/>
    </location>
    <ligand>
        <name>UDP-N-acetyl-alpha-D-glucosamine</name>
        <dbReference type="ChEBI" id="CHEBI:57705"/>
    </ligand>
</feature>
<feature type="binding site" evidence="1">
    <location>
        <position position="82"/>
    </location>
    <ligand>
        <name>1D-myo-inositol 3-phosphate</name>
        <dbReference type="ChEBI" id="CHEBI:58401"/>
    </ligand>
</feature>
<feature type="binding site" evidence="1">
    <location>
        <position position="115"/>
    </location>
    <ligand>
        <name>1D-myo-inositol 3-phosphate</name>
        <dbReference type="ChEBI" id="CHEBI:58401"/>
    </ligand>
</feature>
<feature type="binding site" evidence="1">
    <location>
        <position position="139"/>
    </location>
    <ligand>
        <name>1D-myo-inositol 3-phosphate</name>
        <dbReference type="ChEBI" id="CHEBI:58401"/>
    </ligand>
</feature>
<feature type="binding site" evidence="1">
    <location>
        <position position="159"/>
    </location>
    <ligand>
        <name>1D-myo-inositol 3-phosphate</name>
        <dbReference type="ChEBI" id="CHEBI:58401"/>
    </ligand>
</feature>
<feature type="binding site" evidence="1">
    <location>
        <position position="233"/>
    </location>
    <ligand>
        <name>UDP-N-acetyl-alpha-D-glucosamine</name>
        <dbReference type="ChEBI" id="CHEBI:57705"/>
    </ligand>
</feature>
<feature type="binding site" evidence="1">
    <location>
        <position position="238"/>
    </location>
    <ligand>
        <name>UDP-N-acetyl-alpha-D-glucosamine</name>
        <dbReference type="ChEBI" id="CHEBI:57705"/>
    </ligand>
</feature>
<feature type="binding site" evidence="1">
    <location>
        <position position="294"/>
    </location>
    <ligand>
        <name>UDP-N-acetyl-alpha-D-glucosamine</name>
        <dbReference type="ChEBI" id="CHEBI:57705"/>
    </ligand>
</feature>
<feature type="binding site" evidence="1">
    <location>
        <position position="303"/>
    </location>
    <ligand>
        <name>Mg(2+)</name>
        <dbReference type="ChEBI" id="CHEBI:18420"/>
    </ligand>
</feature>
<feature type="binding site" evidence="1">
    <location>
        <position position="304"/>
    </location>
    <ligand>
        <name>Mg(2+)</name>
        <dbReference type="ChEBI" id="CHEBI:18420"/>
    </ligand>
</feature>
<feature type="binding site" evidence="1">
    <location>
        <position position="306"/>
    </location>
    <ligand>
        <name>Mg(2+)</name>
        <dbReference type="ChEBI" id="CHEBI:18420"/>
    </ligand>
</feature>
<feature type="binding site" evidence="1">
    <location>
        <position position="316"/>
    </location>
    <ligand>
        <name>UDP-N-acetyl-alpha-D-glucosamine</name>
        <dbReference type="ChEBI" id="CHEBI:57705"/>
    </ligand>
</feature>
<feature type="binding site" evidence="1">
    <location>
        <position position="324"/>
    </location>
    <ligand>
        <name>UDP-N-acetyl-alpha-D-glucosamine</name>
        <dbReference type="ChEBI" id="CHEBI:57705"/>
    </ligand>
</feature>
<feature type="binding site" evidence="1">
    <location>
        <position position="330"/>
    </location>
    <ligand>
        <name>Mg(2+)</name>
        <dbReference type="ChEBI" id="CHEBI:18420"/>
    </ligand>
</feature>
<proteinExistence type="inferred from homology"/>
<evidence type="ECO:0000255" key="1">
    <source>
        <dbReference type="HAMAP-Rule" id="MF_01695"/>
    </source>
</evidence>
<comment type="function">
    <text evidence="1">Catalyzes the transfer of a N-acetyl-glucosamine moiety to 1D-myo-inositol 3-phosphate to produce 1D-myo-inositol 2-acetamido-2-deoxy-glucopyranoside 3-phosphate in the mycothiol biosynthesis pathway.</text>
</comment>
<comment type="catalytic activity">
    <reaction evidence="1">
        <text>1D-myo-inositol 3-phosphate + UDP-N-acetyl-alpha-D-glucosamine = 1D-myo-inositol 2-acetamido-2-deoxy-alpha-D-glucopyranoside 3-phosphate + UDP + H(+)</text>
        <dbReference type="Rhea" id="RHEA:26188"/>
        <dbReference type="ChEBI" id="CHEBI:15378"/>
        <dbReference type="ChEBI" id="CHEBI:57705"/>
        <dbReference type="ChEBI" id="CHEBI:58223"/>
        <dbReference type="ChEBI" id="CHEBI:58401"/>
        <dbReference type="ChEBI" id="CHEBI:58892"/>
        <dbReference type="EC" id="2.4.1.250"/>
    </reaction>
</comment>
<comment type="subunit">
    <text evidence="1">Homodimer.</text>
</comment>
<comment type="similarity">
    <text evidence="1">Belongs to the glycosyltransferase group 1 family. MshA subfamily.</text>
</comment>
<reference key="1">
    <citation type="submission" date="2009-01" db="EMBL/GenBank/DDBJ databases">
        <title>Complete sequence of chromosome of Arthrobacter chlorophenolicus A6.</title>
        <authorList>
            <consortium name="US DOE Joint Genome Institute"/>
            <person name="Lucas S."/>
            <person name="Copeland A."/>
            <person name="Lapidus A."/>
            <person name="Glavina del Rio T."/>
            <person name="Tice H."/>
            <person name="Bruce D."/>
            <person name="Goodwin L."/>
            <person name="Pitluck S."/>
            <person name="Goltsman E."/>
            <person name="Clum A."/>
            <person name="Larimer F."/>
            <person name="Land M."/>
            <person name="Hauser L."/>
            <person name="Kyrpides N."/>
            <person name="Mikhailova N."/>
            <person name="Jansson J."/>
            <person name="Richardson P."/>
        </authorList>
    </citation>
    <scope>NUCLEOTIDE SEQUENCE [LARGE SCALE GENOMIC DNA]</scope>
    <source>
        <strain>ATCC 700700 / DSM 12829 / CIP 107037 / JCM 12360 / KCTC 9906 / NCIMB 13794 / A6</strain>
    </source>
</reference>
<accession>B8HCF8</accession>
<dbReference type="EC" id="2.4.1.250" evidence="1"/>
<dbReference type="EMBL" id="CP001341">
    <property type="protein sequence ID" value="ACL40574.1"/>
    <property type="molecule type" value="Genomic_DNA"/>
</dbReference>
<dbReference type="RefSeq" id="WP_015937784.1">
    <property type="nucleotide sequence ID" value="NC_011886.1"/>
</dbReference>
<dbReference type="SMR" id="B8HCF8"/>
<dbReference type="STRING" id="452863.Achl_2609"/>
<dbReference type="CAZy" id="GT4">
    <property type="family name" value="Glycosyltransferase Family 4"/>
</dbReference>
<dbReference type="KEGG" id="ach:Achl_2609"/>
<dbReference type="eggNOG" id="COG0438">
    <property type="taxonomic scope" value="Bacteria"/>
</dbReference>
<dbReference type="HOGENOM" id="CLU_009583_2_3_11"/>
<dbReference type="OrthoDB" id="9810929at2"/>
<dbReference type="Proteomes" id="UP000002505">
    <property type="component" value="Chromosome"/>
</dbReference>
<dbReference type="GO" id="GO:0008375">
    <property type="term" value="F:acetylglucosaminyltransferase activity"/>
    <property type="evidence" value="ECO:0007669"/>
    <property type="project" value="UniProtKB-UniRule"/>
</dbReference>
<dbReference type="GO" id="GO:0102710">
    <property type="term" value="F:D-inositol-3-phosphate glycosyltransferase activity"/>
    <property type="evidence" value="ECO:0007669"/>
    <property type="project" value="UniProtKB-EC"/>
</dbReference>
<dbReference type="GO" id="GO:0000287">
    <property type="term" value="F:magnesium ion binding"/>
    <property type="evidence" value="ECO:0007669"/>
    <property type="project" value="UniProtKB-UniRule"/>
</dbReference>
<dbReference type="GO" id="GO:0010125">
    <property type="term" value="P:mycothiol biosynthetic process"/>
    <property type="evidence" value="ECO:0007669"/>
    <property type="project" value="UniProtKB-UniRule"/>
</dbReference>
<dbReference type="Gene3D" id="3.40.50.2000">
    <property type="entry name" value="Glycogen Phosphorylase B"/>
    <property type="match status" value="2"/>
</dbReference>
<dbReference type="HAMAP" id="MF_01695">
    <property type="entry name" value="MshA"/>
    <property type="match status" value="1"/>
</dbReference>
<dbReference type="InterPro" id="IPR001296">
    <property type="entry name" value="Glyco_trans_1"/>
</dbReference>
<dbReference type="InterPro" id="IPR028098">
    <property type="entry name" value="Glyco_trans_4-like_N"/>
</dbReference>
<dbReference type="InterPro" id="IPR050194">
    <property type="entry name" value="Glycosyltransferase_grp1"/>
</dbReference>
<dbReference type="InterPro" id="IPR017814">
    <property type="entry name" value="Mycothiol_biosynthesis_MshA"/>
</dbReference>
<dbReference type="NCBIfam" id="TIGR03449">
    <property type="entry name" value="mycothiol_MshA"/>
    <property type="match status" value="1"/>
</dbReference>
<dbReference type="PANTHER" id="PTHR45947">
    <property type="entry name" value="SULFOQUINOVOSYL TRANSFERASE SQD2"/>
    <property type="match status" value="1"/>
</dbReference>
<dbReference type="PANTHER" id="PTHR45947:SF3">
    <property type="entry name" value="SULFOQUINOVOSYL TRANSFERASE SQD2"/>
    <property type="match status" value="1"/>
</dbReference>
<dbReference type="Pfam" id="PF13579">
    <property type="entry name" value="Glyco_trans_4_4"/>
    <property type="match status" value="1"/>
</dbReference>
<dbReference type="Pfam" id="PF00534">
    <property type="entry name" value="Glycos_transf_1"/>
    <property type="match status" value="1"/>
</dbReference>
<dbReference type="SUPFAM" id="SSF53756">
    <property type="entry name" value="UDP-Glycosyltransferase/glycogen phosphorylase"/>
    <property type="match status" value="1"/>
</dbReference>
<gene>
    <name evidence="1" type="primary">mshA</name>
    <name type="ordered locus">Achl_2609</name>
</gene>